<feature type="chain" id="PRO_1000070152" description="Membrane protein insertase YidC">
    <location>
        <begin position="1"/>
        <end position="623"/>
    </location>
</feature>
<feature type="transmembrane region" description="Helical" evidence="1">
    <location>
        <begin position="8"/>
        <end position="28"/>
    </location>
</feature>
<feature type="transmembrane region" description="Helical" evidence="1">
    <location>
        <begin position="379"/>
        <end position="399"/>
    </location>
</feature>
<feature type="transmembrane region" description="Helical" evidence="1">
    <location>
        <begin position="449"/>
        <end position="469"/>
    </location>
</feature>
<feature type="transmembrane region" description="Helical" evidence="1">
    <location>
        <begin position="507"/>
        <end position="527"/>
    </location>
</feature>
<feature type="transmembrane region" description="Helical" evidence="1">
    <location>
        <begin position="543"/>
        <end position="563"/>
    </location>
</feature>
<feature type="region of interest" description="Disordered" evidence="2">
    <location>
        <begin position="601"/>
        <end position="623"/>
    </location>
</feature>
<feature type="compositionally biased region" description="Low complexity" evidence="2">
    <location>
        <begin position="601"/>
        <end position="617"/>
    </location>
</feature>
<evidence type="ECO:0000255" key="1">
    <source>
        <dbReference type="HAMAP-Rule" id="MF_01810"/>
    </source>
</evidence>
<evidence type="ECO:0000256" key="2">
    <source>
        <dbReference type="SAM" id="MobiDB-lite"/>
    </source>
</evidence>
<sequence>MDDQNKNLILATGLSFLVIMVWFFLFPPPEAVTEGETTVATQQTAVAPSATPDAPTTAVPPDAELPETQRVVIDTPRLQGSISMLGGRLDDLSLKSYHETLDPQSQIVRLLSPVGQPNAYYALYGWTPAGALGYEDVPGANTTWTQVGSGALGVDQPVTLQWDNGKGLVFTRTISVDDHYMFSVAQTVENNSGQAVQLAPYGIVARHGKPLNLQNFFVLHEGVVGRADGKLTETKYDKVAELPQVAREGAQAEVIDAQQDGWIGFTDKYWMTTLIPQQGQPFTSVTKYVPGADIYQAETREQLVTVAPGATAEVSSRLFAGAKEWETIRAYQNEGATEPTEGAEPIPGFIDSIDWGWFFFLTKPIFTVLHWLNHMIGNMGLAIIALTFLLKALVLPLAYKSYVSMARMKELQPELEALRERAGDDKMLMQREMMRLYKEKQVNPAAGCLPILIQIPIFFSLYKVIFVTIELRHAPFFGWLKDLSAPDPSSIFNFFGLAPWAAPTPGTTMALIFIGALPILLGVSMWLQQKLNPAPGDKAQAMIFAWMPWVFMFMLGHFASGLVLYWIVNNLITFTQQYVIMRSHGHHPDIFGNIKASFSRKPAAQPAGKAANDGAAPAKKRKP</sequence>
<reference key="1">
    <citation type="submission" date="2007-02" db="EMBL/GenBank/DDBJ databases">
        <title>Complete sequence of chromosome 1 of Rhodobacter sphaeroides ATCC 17029.</title>
        <authorList>
            <person name="Copeland A."/>
            <person name="Lucas S."/>
            <person name="Lapidus A."/>
            <person name="Barry K."/>
            <person name="Detter J.C."/>
            <person name="Glavina del Rio T."/>
            <person name="Hammon N."/>
            <person name="Israni S."/>
            <person name="Dalin E."/>
            <person name="Tice H."/>
            <person name="Pitluck S."/>
            <person name="Kiss H."/>
            <person name="Brettin T."/>
            <person name="Bruce D."/>
            <person name="Han C."/>
            <person name="Tapia R."/>
            <person name="Gilna P."/>
            <person name="Schmutz J."/>
            <person name="Larimer F."/>
            <person name="Land M."/>
            <person name="Hauser L."/>
            <person name="Kyrpides N."/>
            <person name="Mikhailova N."/>
            <person name="Richardson P."/>
            <person name="Mackenzie C."/>
            <person name="Choudhary M."/>
            <person name="Donohue T.J."/>
            <person name="Kaplan S."/>
        </authorList>
    </citation>
    <scope>NUCLEOTIDE SEQUENCE [LARGE SCALE GENOMIC DNA]</scope>
    <source>
        <strain>ATCC 17029 / ATH 2.4.9</strain>
    </source>
</reference>
<proteinExistence type="inferred from homology"/>
<dbReference type="EMBL" id="CP000577">
    <property type="protein sequence ID" value="ABN77827.1"/>
    <property type="molecule type" value="Genomic_DNA"/>
</dbReference>
<dbReference type="RefSeq" id="WP_011841846.1">
    <property type="nucleotide sequence ID" value="NC_009049.1"/>
</dbReference>
<dbReference type="SMR" id="A3PNB1"/>
<dbReference type="KEGG" id="rsh:Rsph17029_2725"/>
<dbReference type="HOGENOM" id="CLU_016535_1_0_5"/>
<dbReference type="GO" id="GO:0005886">
    <property type="term" value="C:plasma membrane"/>
    <property type="evidence" value="ECO:0007669"/>
    <property type="project" value="UniProtKB-SubCell"/>
</dbReference>
<dbReference type="GO" id="GO:0032977">
    <property type="term" value="F:membrane insertase activity"/>
    <property type="evidence" value="ECO:0007669"/>
    <property type="project" value="InterPro"/>
</dbReference>
<dbReference type="GO" id="GO:0051205">
    <property type="term" value="P:protein insertion into membrane"/>
    <property type="evidence" value="ECO:0007669"/>
    <property type="project" value="TreeGrafter"/>
</dbReference>
<dbReference type="GO" id="GO:0015031">
    <property type="term" value="P:protein transport"/>
    <property type="evidence" value="ECO:0007669"/>
    <property type="project" value="UniProtKB-KW"/>
</dbReference>
<dbReference type="CDD" id="cd20070">
    <property type="entry name" value="5TM_YidC_Alb3"/>
    <property type="match status" value="1"/>
</dbReference>
<dbReference type="CDD" id="cd19961">
    <property type="entry name" value="EcYidC-like_peri"/>
    <property type="match status" value="1"/>
</dbReference>
<dbReference type="Gene3D" id="2.70.98.90">
    <property type="match status" value="1"/>
</dbReference>
<dbReference type="HAMAP" id="MF_01810">
    <property type="entry name" value="YidC_type1"/>
    <property type="match status" value="1"/>
</dbReference>
<dbReference type="InterPro" id="IPR019998">
    <property type="entry name" value="Membr_insert_YidC"/>
</dbReference>
<dbReference type="InterPro" id="IPR028053">
    <property type="entry name" value="Membr_insert_YidC_N"/>
</dbReference>
<dbReference type="InterPro" id="IPR001708">
    <property type="entry name" value="YidC/ALB3/OXA1/COX18"/>
</dbReference>
<dbReference type="InterPro" id="IPR028055">
    <property type="entry name" value="YidC/Oxa/ALB_C"/>
</dbReference>
<dbReference type="InterPro" id="IPR047196">
    <property type="entry name" value="YidC_ALB_C"/>
</dbReference>
<dbReference type="InterPro" id="IPR038221">
    <property type="entry name" value="YidC_periplasmic_sf"/>
</dbReference>
<dbReference type="NCBIfam" id="NF002353">
    <property type="entry name" value="PRK01318.1-4"/>
    <property type="match status" value="1"/>
</dbReference>
<dbReference type="NCBIfam" id="TIGR03593">
    <property type="entry name" value="yidC_nterm"/>
    <property type="match status" value="1"/>
</dbReference>
<dbReference type="NCBIfam" id="TIGR03592">
    <property type="entry name" value="yidC_oxa1_cterm"/>
    <property type="match status" value="1"/>
</dbReference>
<dbReference type="PANTHER" id="PTHR12428:SF65">
    <property type="entry name" value="CYTOCHROME C OXIDASE ASSEMBLY PROTEIN COX18, MITOCHONDRIAL"/>
    <property type="match status" value="1"/>
</dbReference>
<dbReference type="PANTHER" id="PTHR12428">
    <property type="entry name" value="OXA1"/>
    <property type="match status" value="1"/>
</dbReference>
<dbReference type="Pfam" id="PF02096">
    <property type="entry name" value="60KD_IMP"/>
    <property type="match status" value="1"/>
</dbReference>
<dbReference type="Pfam" id="PF14849">
    <property type="entry name" value="YidC_periplas"/>
    <property type="match status" value="1"/>
</dbReference>
<dbReference type="PRINTS" id="PR00701">
    <property type="entry name" value="60KDINNERMP"/>
</dbReference>
<dbReference type="PRINTS" id="PR01900">
    <property type="entry name" value="YIDCPROTEIN"/>
</dbReference>
<comment type="function">
    <text evidence="1">Required for the insertion and/or proper folding and/or complex formation of integral membrane proteins into the membrane. Involved in integration of membrane proteins that insert both dependently and independently of the Sec translocase complex, as well as at least some lipoproteins. Aids folding of multispanning membrane proteins.</text>
</comment>
<comment type="subunit">
    <text evidence="1">Interacts with the Sec translocase complex via SecD. Specifically interacts with transmembrane segments of nascent integral membrane proteins during membrane integration.</text>
</comment>
<comment type="subcellular location">
    <subcellularLocation>
        <location evidence="1">Cell inner membrane</location>
        <topology evidence="1">Multi-pass membrane protein</topology>
    </subcellularLocation>
</comment>
<comment type="similarity">
    <text evidence="1">Belongs to the OXA1/ALB3/YidC family. Type 1 subfamily.</text>
</comment>
<protein>
    <recommendedName>
        <fullName evidence="1">Membrane protein insertase YidC</fullName>
    </recommendedName>
    <alternativeName>
        <fullName evidence="1">Foldase YidC</fullName>
    </alternativeName>
    <alternativeName>
        <fullName evidence="1">Membrane integrase YidC</fullName>
    </alternativeName>
    <alternativeName>
        <fullName evidence="1">Membrane protein YidC</fullName>
    </alternativeName>
</protein>
<organism>
    <name type="scientific">Cereibacter sphaeroides (strain ATCC 17029 / ATH 2.4.9)</name>
    <name type="common">Rhodobacter sphaeroides</name>
    <dbReference type="NCBI Taxonomy" id="349101"/>
    <lineage>
        <taxon>Bacteria</taxon>
        <taxon>Pseudomonadati</taxon>
        <taxon>Pseudomonadota</taxon>
        <taxon>Alphaproteobacteria</taxon>
        <taxon>Rhodobacterales</taxon>
        <taxon>Paracoccaceae</taxon>
        <taxon>Cereibacter</taxon>
    </lineage>
</organism>
<keyword id="KW-0997">Cell inner membrane</keyword>
<keyword id="KW-1003">Cell membrane</keyword>
<keyword id="KW-0143">Chaperone</keyword>
<keyword id="KW-0472">Membrane</keyword>
<keyword id="KW-0653">Protein transport</keyword>
<keyword id="KW-0812">Transmembrane</keyword>
<keyword id="KW-1133">Transmembrane helix</keyword>
<keyword id="KW-0813">Transport</keyword>
<name>YIDC_CERS1</name>
<accession>A3PNB1</accession>
<gene>
    <name evidence="1" type="primary">yidC</name>
    <name type="ordered locus">Rsph17029_2725</name>
</gene>